<comment type="function">
    <text>Does not have a carbonic anhydrase catalytic activity.</text>
</comment>
<comment type="interaction">
    <interactant intactId="EBI-718700">
        <id>P35219</id>
    </interactant>
    <interactant intactId="EBI-748171">
        <id>O43186</id>
        <label>CRX</label>
    </interactant>
    <organismsDiffer>false</organismsDiffer>
    <experiments>7</experiments>
</comment>
<comment type="interaction">
    <interactant intactId="EBI-718700">
        <id>P35219</id>
    </interactant>
    <interactant intactId="EBI-447646">
        <id>Q9UJY4</id>
        <label>GGA2</label>
    </interactant>
    <organismsDiffer>false</organismsDiffer>
    <experiments>6</experiments>
</comment>
<comment type="interaction">
    <interactant intactId="EBI-718700">
        <id>P35219</id>
    </interactant>
    <interactant intactId="EBI-742664">
        <id>Q9BPX1</id>
        <label>HSD17B14</label>
    </interactant>
    <organismsDiffer>false</organismsDiffer>
    <experiments>14</experiments>
</comment>
<comment type="interaction">
    <interactant intactId="EBI-718700">
        <id>P35219</id>
    </interactant>
    <interactant intactId="EBI-11276282">
        <id>Q9NVH2</id>
        <label>INTS7</label>
    </interactant>
    <organismsDiffer>false</organismsDiffer>
    <experiments>3</experiments>
</comment>
<comment type="interaction">
    <interactant intactId="EBI-718700">
        <id>P35219</id>
    </interactant>
    <interactant intactId="EBI-11959635">
        <id>Q9P2G9-2</id>
        <label>KLHL8</label>
    </interactant>
    <organismsDiffer>false</organismsDiffer>
    <experiments>3</experiments>
</comment>
<comment type="interaction">
    <interactant intactId="EBI-718700">
        <id>P35219</id>
    </interactant>
    <interactant intactId="EBI-2830427">
        <id>Q03252</id>
        <label>LMNB2</label>
    </interactant>
    <organismsDiffer>false</organismsDiffer>
    <experiments>3</experiments>
</comment>
<comment type="interaction">
    <interactant intactId="EBI-718700">
        <id>P35219</id>
    </interactant>
    <interactant intactId="EBI-739832">
        <id>Q8TBB1</id>
        <label>LNX1</label>
    </interactant>
    <organismsDiffer>false</organismsDiffer>
    <experiments>6</experiments>
</comment>
<comment type="interaction">
    <interactant intactId="EBI-718700">
        <id>P35219</id>
    </interactant>
    <interactant intactId="EBI-716006">
        <id>Q9Y5V3</id>
        <label>MAGED1</label>
    </interactant>
    <organismsDiffer>false</organismsDiffer>
    <experiments>9</experiments>
</comment>
<comment type="interaction">
    <interactant intactId="EBI-718700">
        <id>P35219</id>
    </interactant>
    <interactant intactId="EBI-2856739">
        <id>Q9BZG1</id>
        <label>RAB34</label>
    </interactant>
    <organismsDiffer>false</organismsDiffer>
    <experiments>3</experiments>
</comment>
<comment type="interaction">
    <interactant intactId="EBI-718700">
        <id>P35219</id>
    </interactant>
    <interactant intactId="EBI-715381">
        <id>Q96EA4</id>
        <label>SPDL1</label>
    </interactant>
    <organismsDiffer>false</organismsDiffer>
    <experiments>6</experiments>
</comment>
<comment type="interaction">
    <interactant intactId="EBI-718700">
        <id>P35219</id>
    </interactant>
    <interactant intactId="EBI-3452216">
        <id>O15119</id>
        <label>TBX3</label>
    </interactant>
    <organismsDiffer>false</organismsDiffer>
    <experiments>3</experiments>
</comment>
<comment type="disease" evidence="6">
    <disease id="DI-02743">
        <name>Spinocerebellar ataxia, autosomal recessive, 34</name>
        <acronym>SCAR34</acronym>
        <description>A form of spinocerebellar ataxia, a clinically and genetically heterogeneous group of cerebellar disorders due to degeneration of the cerebellum with variable involvement of the brainstem and spinal cord. SCAR34 is characterized by congenital cerebellar ataxia associated with dysarthia, quadrupedal gait and intellectual disability.</description>
        <dbReference type="MIM" id="613227"/>
    </disease>
    <text>The disease is caused by variants affecting the gene represented in this entry.</text>
</comment>
<comment type="similarity">
    <text evidence="7">Belongs to the alpha-carbonic anhydrase family.</text>
</comment>
<comment type="caution">
    <text evidence="7">Although it belongs to the alpha-carbonic anhydrase family, Arg-116 is present instead of the conserved His which is a zinc-binding residue. It is therefore expected that this protein lacks carbonic anhydrase activity.</text>
</comment>
<sequence>MADLSFIEDTVAFPEKEEDEEEEEEGVEWGYEEGVEWGLVFPDANGEYQSPINLNSREARYDPSLLDVRLSPNYVVCRDCEVTNDGHTIQVILKSKSVLSGGPLPQGHEFELYEVRFHWGRENQRGSEHTVNFKAFPMELHLIHWNSTLFGSIDEAVGKPHGIAIIALFVQIGKEHVGLKAVTEILQDIQYKGKSKTIPCFNPNTLLPDPLLRDYWVYEGSLTIPPCSEGVTWILFRYPLTISQLQIEEFRRLRTHVKGAELVEGCDGILGDNFRPTQPLSDRVIRAAFQ</sequence>
<gene>
    <name type="primary">CA8</name>
    <name type="synonym">CALS</name>
</gene>
<keyword id="KW-0002">3D-structure</keyword>
<keyword id="KW-0225">Disease variant</keyword>
<keyword id="KW-0991">Intellectual disability</keyword>
<keyword id="KW-0479">Metal-binding</keyword>
<keyword id="KW-0597">Phosphoprotein</keyword>
<keyword id="KW-1267">Proteomics identification</keyword>
<keyword id="KW-1185">Reference proteome</keyword>
<keyword id="KW-0862">Zinc</keyword>
<dbReference type="EMBL" id="L04656">
    <property type="protein sequence ID" value="AAA35653.2"/>
    <property type="molecule type" value="mRNA"/>
</dbReference>
<dbReference type="EMBL" id="AY075022">
    <property type="protein sequence ID" value="AAL78170.1"/>
    <property type="molecule type" value="mRNA"/>
</dbReference>
<dbReference type="EMBL" id="AK289470">
    <property type="protein sequence ID" value="BAF82159.1"/>
    <property type="molecule type" value="mRNA"/>
</dbReference>
<dbReference type="EMBL" id="AK314538">
    <property type="protein sequence ID" value="BAG37128.1"/>
    <property type="molecule type" value="mRNA"/>
</dbReference>
<dbReference type="EMBL" id="AK090655">
    <property type="protein sequence ID" value="BAG52209.1"/>
    <property type="molecule type" value="mRNA"/>
</dbReference>
<dbReference type="EMBL" id="CH471068">
    <property type="protein sequence ID" value="EAW86826.1"/>
    <property type="molecule type" value="Genomic_DNA"/>
</dbReference>
<dbReference type="EMBL" id="BC069744">
    <property type="protein sequence ID" value="AAH69744.1"/>
    <property type="molecule type" value="mRNA"/>
</dbReference>
<dbReference type="EMBL" id="BC069794">
    <property type="protein sequence ID" value="AAH69794.1"/>
    <property type="molecule type" value="mRNA"/>
</dbReference>
<dbReference type="EMBL" id="BC108929">
    <property type="protein sequence ID" value="AAI08930.1"/>
    <property type="molecule type" value="mRNA"/>
</dbReference>
<dbReference type="CCDS" id="CCDS6174.1"/>
<dbReference type="PIR" id="JN0576">
    <property type="entry name" value="JN0576"/>
</dbReference>
<dbReference type="RefSeq" id="NP_001308766.1">
    <property type="nucleotide sequence ID" value="NM_001321837.2"/>
</dbReference>
<dbReference type="RefSeq" id="NP_001308767.1">
    <property type="nucleotide sequence ID" value="NM_001321838.1"/>
</dbReference>
<dbReference type="RefSeq" id="NP_001308768.1">
    <property type="nucleotide sequence ID" value="NM_001321839.1"/>
</dbReference>
<dbReference type="RefSeq" id="NP_004047.3">
    <property type="nucleotide sequence ID" value="NM_004056.5"/>
</dbReference>
<dbReference type="PDB" id="2W2J">
    <property type="method" value="X-ray"/>
    <property type="resolution" value="1.60 A"/>
    <property type="chains" value="A=1-290"/>
</dbReference>
<dbReference type="PDBsum" id="2W2J"/>
<dbReference type="SMR" id="P35219"/>
<dbReference type="BioGRID" id="107222">
    <property type="interactions" value="40"/>
</dbReference>
<dbReference type="FunCoup" id="P35219">
    <property type="interactions" value="62"/>
</dbReference>
<dbReference type="IntAct" id="P35219">
    <property type="interactions" value="37"/>
</dbReference>
<dbReference type="MINT" id="P35219"/>
<dbReference type="STRING" id="9606.ENSP00000314407"/>
<dbReference type="DrugBank" id="DB00909">
    <property type="generic name" value="Zonisamide"/>
</dbReference>
<dbReference type="GlyGen" id="P35219">
    <property type="glycosylation" value="1 site, 1 O-linked glycan (1 site)"/>
</dbReference>
<dbReference type="iPTMnet" id="P35219"/>
<dbReference type="PhosphoSitePlus" id="P35219"/>
<dbReference type="BioMuta" id="CA8"/>
<dbReference type="DMDM" id="461681"/>
<dbReference type="jPOST" id="P35219"/>
<dbReference type="MassIVE" id="P35219"/>
<dbReference type="PaxDb" id="9606-ENSP00000314407"/>
<dbReference type="PeptideAtlas" id="P35219"/>
<dbReference type="ProteomicsDB" id="54985"/>
<dbReference type="Pumba" id="P35219"/>
<dbReference type="Antibodypedia" id="11840">
    <property type="antibodies" value="311 antibodies from 35 providers"/>
</dbReference>
<dbReference type="CPTC" id="P35219">
    <property type="antibodies" value="2 antibodies"/>
</dbReference>
<dbReference type="DNASU" id="767"/>
<dbReference type="Ensembl" id="ENST00000317995.5">
    <property type="protein sequence ID" value="ENSP00000314407.4"/>
    <property type="gene ID" value="ENSG00000178538.10"/>
</dbReference>
<dbReference type="GeneID" id="767"/>
<dbReference type="KEGG" id="hsa:767"/>
<dbReference type="MANE-Select" id="ENST00000317995.5">
    <property type="protein sequence ID" value="ENSP00000314407.4"/>
    <property type="RefSeq nucleotide sequence ID" value="NM_004056.6"/>
    <property type="RefSeq protein sequence ID" value="NP_004047.3"/>
</dbReference>
<dbReference type="UCSC" id="uc003xtz.2">
    <property type="organism name" value="human"/>
</dbReference>
<dbReference type="AGR" id="HGNC:1382"/>
<dbReference type="CTD" id="767"/>
<dbReference type="DisGeNET" id="767"/>
<dbReference type="GeneCards" id="CA8"/>
<dbReference type="HGNC" id="HGNC:1382">
    <property type="gene designation" value="CA8"/>
</dbReference>
<dbReference type="HPA" id="ENSG00000178538">
    <property type="expression patterns" value="Tissue enhanced (brain, parathyroid gland)"/>
</dbReference>
<dbReference type="MalaCards" id="CA8"/>
<dbReference type="MIM" id="114815">
    <property type="type" value="gene"/>
</dbReference>
<dbReference type="MIM" id="613227">
    <property type="type" value="phenotype"/>
</dbReference>
<dbReference type="neXtProt" id="NX_P35219"/>
<dbReference type="OpenTargets" id="ENSG00000178538"/>
<dbReference type="Orphanet" id="1766">
    <property type="disease" value="Dysequilibrium syndrome"/>
</dbReference>
<dbReference type="PharmGKB" id="PA25997"/>
<dbReference type="VEuPathDB" id="HostDB:ENSG00000178538"/>
<dbReference type="eggNOG" id="KOG0382">
    <property type="taxonomic scope" value="Eukaryota"/>
</dbReference>
<dbReference type="GeneTree" id="ENSGT00940000158863"/>
<dbReference type="HOGENOM" id="CLU_039326_2_1_1"/>
<dbReference type="InParanoid" id="P35219"/>
<dbReference type="OMA" id="CTEGIVW"/>
<dbReference type="OrthoDB" id="429145at2759"/>
<dbReference type="PAN-GO" id="P35219">
    <property type="GO annotations" value="2 GO annotations based on evolutionary models"/>
</dbReference>
<dbReference type="PhylomeDB" id="P35219"/>
<dbReference type="TreeFam" id="TF316425"/>
<dbReference type="BRENDA" id="4.2.1.1">
    <property type="organism ID" value="2681"/>
</dbReference>
<dbReference type="PathwayCommons" id="P35219"/>
<dbReference type="SignaLink" id="P35219"/>
<dbReference type="BioGRID-ORCS" id="767">
    <property type="hits" value="14 hits in 1158 CRISPR screens"/>
</dbReference>
<dbReference type="ChiTaRS" id="CA8">
    <property type="organism name" value="human"/>
</dbReference>
<dbReference type="EvolutionaryTrace" id="P35219"/>
<dbReference type="GeneWiki" id="CA8"/>
<dbReference type="GenomeRNAi" id="767"/>
<dbReference type="Pharos" id="P35219">
    <property type="development level" value="Tbio"/>
</dbReference>
<dbReference type="PRO" id="PR:P35219"/>
<dbReference type="Proteomes" id="UP000005640">
    <property type="component" value="Chromosome 8"/>
</dbReference>
<dbReference type="RNAct" id="P35219">
    <property type="molecule type" value="protein"/>
</dbReference>
<dbReference type="Bgee" id="ENSG00000178538">
    <property type="expression patterns" value="Expressed in metanephros cortex and 118 other cell types or tissues"/>
</dbReference>
<dbReference type="GO" id="GO:0005737">
    <property type="term" value="C:cytoplasm"/>
    <property type="evidence" value="ECO:0007669"/>
    <property type="project" value="Ensembl"/>
</dbReference>
<dbReference type="GO" id="GO:0004089">
    <property type="term" value="F:carbonate dehydratase activity"/>
    <property type="evidence" value="ECO:0000304"/>
    <property type="project" value="ProtInc"/>
</dbReference>
<dbReference type="GO" id="GO:0008270">
    <property type="term" value="F:zinc ion binding"/>
    <property type="evidence" value="ECO:0007669"/>
    <property type="project" value="InterPro"/>
</dbReference>
<dbReference type="GO" id="GO:0050850">
    <property type="term" value="P:positive regulation of calcium-mediated signaling"/>
    <property type="evidence" value="ECO:0007669"/>
    <property type="project" value="Ensembl"/>
</dbReference>
<dbReference type="CDD" id="cd03120">
    <property type="entry name" value="alpha_CARP_VIII"/>
    <property type="match status" value="1"/>
</dbReference>
<dbReference type="FunFam" id="3.10.200.10:FF:000006">
    <property type="entry name" value="Carbonic anhydrase-related protein-like"/>
    <property type="match status" value="1"/>
</dbReference>
<dbReference type="Gene3D" id="3.10.200.10">
    <property type="entry name" value="Alpha carbonic anhydrase"/>
    <property type="match status" value="1"/>
</dbReference>
<dbReference type="InterPro" id="IPR001148">
    <property type="entry name" value="CA_dom"/>
</dbReference>
<dbReference type="InterPro" id="IPR036398">
    <property type="entry name" value="CA_dom_sf"/>
</dbReference>
<dbReference type="InterPro" id="IPR023561">
    <property type="entry name" value="Carbonic_anhydrase_a-class"/>
</dbReference>
<dbReference type="InterPro" id="IPR018338">
    <property type="entry name" value="Carbonic_anhydrase_a-class_CS"/>
</dbReference>
<dbReference type="InterPro" id="IPR041877">
    <property type="entry name" value="CARP_VIII"/>
</dbReference>
<dbReference type="PANTHER" id="PTHR18952">
    <property type="entry name" value="CARBONIC ANHYDRASE"/>
    <property type="match status" value="1"/>
</dbReference>
<dbReference type="PANTHER" id="PTHR18952:SF104">
    <property type="entry name" value="CARBONIC ANHYDRASE-RELATED PROTEIN"/>
    <property type="match status" value="1"/>
</dbReference>
<dbReference type="Pfam" id="PF00194">
    <property type="entry name" value="Carb_anhydrase"/>
    <property type="match status" value="1"/>
</dbReference>
<dbReference type="SMART" id="SM01057">
    <property type="entry name" value="Carb_anhydrase"/>
    <property type="match status" value="1"/>
</dbReference>
<dbReference type="SUPFAM" id="SSF51069">
    <property type="entry name" value="Carbonic anhydrase"/>
    <property type="match status" value="1"/>
</dbReference>
<dbReference type="PROSITE" id="PS00162">
    <property type="entry name" value="ALPHA_CA_1"/>
    <property type="match status" value="1"/>
</dbReference>
<dbReference type="PROSITE" id="PS51144">
    <property type="entry name" value="ALPHA_CA_2"/>
    <property type="match status" value="1"/>
</dbReference>
<feature type="chain" id="PRO_0000077433" description="Carbonic anhydrase-related protein">
    <location>
        <begin position="1"/>
        <end position="290"/>
    </location>
</feature>
<feature type="domain" description="Alpha-carbonic anhydrase" evidence="4">
    <location>
        <begin position="27"/>
        <end position="289"/>
    </location>
</feature>
<feature type="region of interest" description="Disordered" evidence="5">
    <location>
        <begin position="1"/>
        <end position="26"/>
    </location>
</feature>
<feature type="compositionally biased region" description="Acidic residues" evidence="5">
    <location>
        <begin position="16"/>
        <end position="26"/>
    </location>
</feature>
<feature type="active site" description="Proton donor/acceptor" evidence="1">
    <location>
        <position position="87"/>
    </location>
</feature>
<feature type="binding site" evidence="3">
    <location>
        <position position="118"/>
    </location>
    <ligand>
        <name>Zn(2+)</name>
        <dbReference type="ChEBI" id="CHEBI:29105"/>
    </ligand>
</feature>
<feature type="binding site" evidence="3">
    <location>
        <position position="141"/>
    </location>
    <ligand>
        <name>Zn(2+)</name>
        <dbReference type="ChEBI" id="CHEBI:29105"/>
    </ligand>
</feature>
<feature type="site" description="Ancestral zinc ligand">
    <location>
        <position position="116"/>
    </location>
</feature>
<feature type="modified residue" description="Phosphoserine" evidence="2">
    <location>
        <position position="5"/>
    </location>
</feature>
<feature type="sequence variant" id="VAR_063634" description="In SCAR34; affects protein stability owing to accelerated proteasomal degradation; dbSNP:rs267606695." evidence="6">
    <original>S</original>
    <variation>P</variation>
    <location>
        <position position="100"/>
    </location>
</feature>
<feature type="sequence conflict" description="In Ref. 3; BAG52209." evidence="7" ref="3">
    <original>Q</original>
    <variation>R</variation>
    <location>
        <position position="106"/>
    </location>
</feature>
<feature type="strand" evidence="8">
    <location>
        <begin position="31"/>
        <end position="34"/>
    </location>
</feature>
<feature type="helix" evidence="8">
    <location>
        <begin position="37"/>
        <end position="39"/>
    </location>
</feature>
<feature type="helix" evidence="8">
    <location>
        <begin position="42"/>
        <end position="45"/>
    </location>
</feature>
<feature type="helix" evidence="8">
    <location>
        <begin position="56"/>
        <end position="58"/>
    </location>
</feature>
<feature type="helix" evidence="8">
    <location>
        <begin position="63"/>
        <end position="66"/>
    </location>
</feature>
<feature type="strand" evidence="8">
    <location>
        <begin position="71"/>
        <end position="73"/>
    </location>
</feature>
<feature type="strand" evidence="8">
    <location>
        <begin position="77"/>
        <end position="84"/>
    </location>
</feature>
<feature type="strand" evidence="8">
    <location>
        <begin position="89"/>
        <end position="92"/>
    </location>
</feature>
<feature type="strand" evidence="8">
    <location>
        <begin position="97"/>
        <end position="101"/>
    </location>
</feature>
<feature type="strand" evidence="8">
    <location>
        <begin position="110"/>
        <end position="119"/>
    </location>
</feature>
<feature type="strand" evidence="8">
    <location>
        <begin position="128"/>
        <end position="131"/>
    </location>
</feature>
<feature type="strand" evidence="8">
    <location>
        <begin position="137"/>
        <end position="146"/>
    </location>
</feature>
<feature type="turn" evidence="8">
    <location>
        <begin position="147"/>
        <end position="149"/>
    </location>
</feature>
<feature type="helix" evidence="8">
    <location>
        <begin position="153"/>
        <end position="156"/>
    </location>
</feature>
<feature type="strand" evidence="8">
    <location>
        <begin position="163"/>
        <end position="174"/>
    </location>
</feature>
<feature type="helix" evidence="8">
    <location>
        <begin position="177"/>
        <end position="183"/>
    </location>
</feature>
<feature type="helix" evidence="8">
    <location>
        <begin position="184"/>
        <end position="189"/>
    </location>
</feature>
<feature type="strand" evidence="8">
    <location>
        <begin position="194"/>
        <end position="199"/>
    </location>
</feature>
<feature type="helix" evidence="8">
    <location>
        <begin position="203"/>
        <end position="206"/>
    </location>
</feature>
<feature type="strand" evidence="8">
    <location>
        <begin position="215"/>
        <end position="221"/>
    </location>
</feature>
<feature type="strand" evidence="8">
    <location>
        <begin position="229"/>
        <end position="238"/>
    </location>
</feature>
<feature type="strand" evidence="8">
    <location>
        <begin position="240"/>
        <end position="242"/>
    </location>
</feature>
<feature type="helix" evidence="8">
    <location>
        <begin position="244"/>
        <end position="250"/>
    </location>
</feature>
<feature type="strand" evidence="8">
    <location>
        <begin position="254"/>
        <end position="256"/>
    </location>
</feature>
<feature type="strand" evidence="8">
    <location>
        <begin position="286"/>
        <end position="288"/>
    </location>
</feature>
<accession>P35219</accession>
<accession>A8K0A5</accession>
<accession>B3KQZ7</accession>
<accession>Q32MY2</accession>
<evidence type="ECO:0000250" key="1">
    <source>
        <dbReference type="UniProtKB" id="P00918"/>
    </source>
</evidence>
<evidence type="ECO:0000250" key="2">
    <source>
        <dbReference type="UniProtKB" id="Q5PPN4"/>
    </source>
</evidence>
<evidence type="ECO:0000255" key="3"/>
<evidence type="ECO:0000255" key="4">
    <source>
        <dbReference type="PROSITE-ProRule" id="PRU01134"/>
    </source>
</evidence>
<evidence type="ECO:0000256" key="5">
    <source>
        <dbReference type="SAM" id="MobiDB-lite"/>
    </source>
</evidence>
<evidence type="ECO:0000269" key="6">
    <source>
    </source>
</evidence>
<evidence type="ECO:0000305" key="7"/>
<evidence type="ECO:0007829" key="8">
    <source>
        <dbReference type="PDB" id="2W2J"/>
    </source>
</evidence>
<proteinExistence type="evidence at protein level"/>
<name>CAH8_HUMAN</name>
<protein>
    <recommendedName>
        <fullName>Carbonic anhydrase-related protein</fullName>
        <shortName>CARP</shortName>
    </recommendedName>
    <alternativeName>
        <fullName>Carbonic anhydrase VIII</fullName>
        <shortName>CA-VIII</shortName>
    </alternativeName>
</protein>
<reference key="1">
    <citation type="journal article" date="1993" name="Gene">
        <title>The deduced amino acid sequence of human carbonic anhydrase-related protein (CARP) is 98% identical to the mouse homologue.</title>
        <authorList>
            <person name="Skaggs L.A."/>
            <person name="Bergenhem N.C.H."/>
            <person name="Venta P.J."/>
            <person name="Tashian R.E."/>
        </authorList>
    </citation>
    <scope>NUCLEOTIDE SEQUENCE [MRNA]</scope>
</reference>
<reference key="2">
    <citation type="submission" date="2002-01" db="EMBL/GenBank/DDBJ databases">
        <title>Molecular identification of carbonic anhydrases (CA) and CA-related (CAR) genes.</title>
        <authorList>
            <person name="Chen Y."/>
            <person name="Huang C.-H."/>
        </authorList>
    </citation>
    <scope>NUCLEOTIDE SEQUENCE [MRNA]</scope>
</reference>
<reference key="3">
    <citation type="journal article" date="2004" name="Nat. Genet.">
        <title>Complete sequencing and characterization of 21,243 full-length human cDNAs.</title>
        <authorList>
            <person name="Ota T."/>
            <person name="Suzuki Y."/>
            <person name="Nishikawa T."/>
            <person name="Otsuki T."/>
            <person name="Sugiyama T."/>
            <person name="Irie R."/>
            <person name="Wakamatsu A."/>
            <person name="Hayashi K."/>
            <person name="Sato H."/>
            <person name="Nagai K."/>
            <person name="Kimura K."/>
            <person name="Makita H."/>
            <person name="Sekine M."/>
            <person name="Obayashi M."/>
            <person name="Nishi T."/>
            <person name="Shibahara T."/>
            <person name="Tanaka T."/>
            <person name="Ishii S."/>
            <person name="Yamamoto J."/>
            <person name="Saito K."/>
            <person name="Kawai Y."/>
            <person name="Isono Y."/>
            <person name="Nakamura Y."/>
            <person name="Nagahari K."/>
            <person name="Murakami K."/>
            <person name="Yasuda T."/>
            <person name="Iwayanagi T."/>
            <person name="Wagatsuma M."/>
            <person name="Shiratori A."/>
            <person name="Sudo H."/>
            <person name="Hosoiri T."/>
            <person name="Kaku Y."/>
            <person name="Kodaira H."/>
            <person name="Kondo H."/>
            <person name="Sugawara M."/>
            <person name="Takahashi M."/>
            <person name="Kanda K."/>
            <person name="Yokoi T."/>
            <person name="Furuya T."/>
            <person name="Kikkawa E."/>
            <person name="Omura Y."/>
            <person name="Abe K."/>
            <person name="Kamihara K."/>
            <person name="Katsuta N."/>
            <person name="Sato K."/>
            <person name="Tanikawa M."/>
            <person name="Yamazaki M."/>
            <person name="Ninomiya K."/>
            <person name="Ishibashi T."/>
            <person name="Yamashita H."/>
            <person name="Murakawa K."/>
            <person name="Fujimori K."/>
            <person name="Tanai H."/>
            <person name="Kimata M."/>
            <person name="Watanabe M."/>
            <person name="Hiraoka S."/>
            <person name="Chiba Y."/>
            <person name="Ishida S."/>
            <person name="Ono Y."/>
            <person name="Takiguchi S."/>
            <person name="Watanabe S."/>
            <person name="Yosida M."/>
            <person name="Hotuta T."/>
            <person name="Kusano J."/>
            <person name="Kanehori K."/>
            <person name="Takahashi-Fujii A."/>
            <person name="Hara H."/>
            <person name="Tanase T.-O."/>
            <person name="Nomura Y."/>
            <person name="Togiya S."/>
            <person name="Komai F."/>
            <person name="Hara R."/>
            <person name="Takeuchi K."/>
            <person name="Arita M."/>
            <person name="Imose N."/>
            <person name="Musashino K."/>
            <person name="Yuuki H."/>
            <person name="Oshima A."/>
            <person name="Sasaki N."/>
            <person name="Aotsuka S."/>
            <person name="Yoshikawa Y."/>
            <person name="Matsunawa H."/>
            <person name="Ichihara T."/>
            <person name="Shiohata N."/>
            <person name="Sano S."/>
            <person name="Moriya S."/>
            <person name="Momiyama H."/>
            <person name="Satoh N."/>
            <person name="Takami S."/>
            <person name="Terashima Y."/>
            <person name="Suzuki O."/>
            <person name="Nakagawa S."/>
            <person name="Senoh A."/>
            <person name="Mizoguchi H."/>
            <person name="Goto Y."/>
            <person name="Shimizu F."/>
            <person name="Wakebe H."/>
            <person name="Hishigaki H."/>
            <person name="Watanabe T."/>
            <person name="Sugiyama A."/>
            <person name="Takemoto M."/>
            <person name="Kawakami B."/>
            <person name="Yamazaki M."/>
            <person name="Watanabe K."/>
            <person name="Kumagai A."/>
            <person name="Itakura S."/>
            <person name="Fukuzumi Y."/>
            <person name="Fujimori Y."/>
            <person name="Komiyama M."/>
            <person name="Tashiro H."/>
            <person name="Tanigami A."/>
            <person name="Fujiwara T."/>
            <person name="Ono T."/>
            <person name="Yamada K."/>
            <person name="Fujii Y."/>
            <person name="Ozaki K."/>
            <person name="Hirao M."/>
            <person name="Ohmori Y."/>
            <person name="Kawabata A."/>
            <person name="Hikiji T."/>
            <person name="Kobatake N."/>
            <person name="Inagaki H."/>
            <person name="Ikema Y."/>
            <person name="Okamoto S."/>
            <person name="Okitani R."/>
            <person name="Kawakami T."/>
            <person name="Noguchi S."/>
            <person name="Itoh T."/>
            <person name="Shigeta K."/>
            <person name="Senba T."/>
            <person name="Matsumura K."/>
            <person name="Nakajima Y."/>
            <person name="Mizuno T."/>
            <person name="Morinaga M."/>
            <person name="Sasaki M."/>
            <person name="Togashi T."/>
            <person name="Oyama M."/>
            <person name="Hata H."/>
            <person name="Watanabe M."/>
            <person name="Komatsu T."/>
            <person name="Mizushima-Sugano J."/>
            <person name="Satoh T."/>
            <person name="Shirai Y."/>
            <person name="Takahashi Y."/>
            <person name="Nakagawa K."/>
            <person name="Okumura K."/>
            <person name="Nagase T."/>
            <person name="Nomura N."/>
            <person name="Kikuchi H."/>
            <person name="Masuho Y."/>
            <person name="Yamashita R."/>
            <person name="Nakai K."/>
            <person name="Yada T."/>
            <person name="Nakamura Y."/>
            <person name="Ohara O."/>
            <person name="Isogai T."/>
            <person name="Sugano S."/>
        </authorList>
    </citation>
    <scope>NUCLEOTIDE SEQUENCE [LARGE SCALE MRNA]</scope>
    <source>
        <tissue>Cerebellum</tissue>
    </source>
</reference>
<reference key="4">
    <citation type="submission" date="2005-07" db="EMBL/GenBank/DDBJ databases">
        <authorList>
            <person name="Mural R.J."/>
            <person name="Istrail S."/>
            <person name="Sutton G.G."/>
            <person name="Florea L."/>
            <person name="Halpern A.L."/>
            <person name="Mobarry C.M."/>
            <person name="Lippert R."/>
            <person name="Walenz B."/>
            <person name="Shatkay H."/>
            <person name="Dew I."/>
            <person name="Miller J.R."/>
            <person name="Flanigan M.J."/>
            <person name="Edwards N.J."/>
            <person name="Bolanos R."/>
            <person name="Fasulo D."/>
            <person name="Halldorsson B.V."/>
            <person name="Hannenhalli S."/>
            <person name="Turner R."/>
            <person name="Yooseph S."/>
            <person name="Lu F."/>
            <person name="Nusskern D.R."/>
            <person name="Shue B.C."/>
            <person name="Zheng X.H."/>
            <person name="Zhong F."/>
            <person name="Delcher A.L."/>
            <person name="Huson D.H."/>
            <person name="Kravitz S.A."/>
            <person name="Mouchard L."/>
            <person name="Reinert K."/>
            <person name="Remington K.A."/>
            <person name="Clark A.G."/>
            <person name="Waterman M.S."/>
            <person name="Eichler E.E."/>
            <person name="Adams M.D."/>
            <person name="Hunkapiller M.W."/>
            <person name="Myers E.W."/>
            <person name="Venter J.C."/>
        </authorList>
    </citation>
    <scope>NUCLEOTIDE SEQUENCE [LARGE SCALE GENOMIC DNA]</scope>
</reference>
<reference key="5">
    <citation type="journal article" date="2004" name="Genome Res.">
        <title>The status, quality, and expansion of the NIH full-length cDNA project: the Mammalian Gene Collection (MGC).</title>
        <authorList>
            <consortium name="The MGC Project Team"/>
        </authorList>
    </citation>
    <scope>NUCLEOTIDE SEQUENCE [LARGE SCALE MRNA]</scope>
</reference>
<reference key="6">
    <citation type="journal article" date="2011" name="BMC Syst. Biol.">
        <title>Initial characterization of the human central proteome.</title>
        <authorList>
            <person name="Burkard T.R."/>
            <person name="Planyavsky M."/>
            <person name="Kaupe I."/>
            <person name="Breitwieser F.P."/>
            <person name="Buerckstuemmer T."/>
            <person name="Bennett K.L."/>
            <person name="Superti-Furga G."/>
            <person name="Colinge J."/>
        </authorList>
    </citation>
    <scope>IDENTIFICATION BY MASS SPECTROMETRY [LARGE SCALE ANALYSIS]</scope>
</reference>
<reference key="7">
    <citation type="journal article" date="2009" name="Proteins">
        <title>Crystal structure of human carbonic anhydrase-related protein VIII reveals the basis for catalytic silencing.</title>
        <authorList>
            <person name="Picaud S.S."/>
            <person name="Muniz J.R.C."/>
            <person name="Kramm A."/>
            <person name="Pilka E.S."/>
            <person name="Kochan G."/>
            <person name="Oppermann U."/>
            <person name="Yue W.W."/>
        </authorList>
    </citation>
    <scope>X-RAY CRYSTALLOGRAPHY (1.6 ANGSTROMS)</scope>
</reference>
<reference key="8">
    <citation type="journal article" date="2009" name="PLoS Genet.">
        <title>CA8 mutations cause a novel syndrome characterized by ataxia and mild mental retardation with predisposition to quadrupedal gait.</title>
        <authorList>
            <person name="Turkmen S."/>
            <person name="Guo G."/>
            <person name="Garshasbi M."/>
            <person name="Hoffmann K."/>
            <person name="Alshalah A.J."/>
            <person name="Mischung C."/>
            <person name="Kuss A."/>
            <person name="Humphrey N."/>
            <person name="Mundlos S."/>
            <person name="Robinson P.N."/>
        </authorList>
    </citation>
    <scope>VARIANT SCAR34 PRO-100</scope>
    <scope>CHARACTERIZATION OF VARIANT SCAR34 PRO-100</scope>
</reference>
<organism>
    <name type="scientific">Homo sapiens</name>
    <name type="common">Human</name>
    <dbReference type="NCBI Taxonomy" id="9606"/>
    <lineage>
        <taxon>Eukaryota</taxon>
        <taxon>Metazoa</taxon>
        <taxon>Chordata</taxon>
        <taxon>Craniata</taxon>
        <taxon>Vertebrata</taxon>
        <taxon>Euteleostomi</taxon>
        <taxon>Mammalia</taxon>
        <taxon>Eutheria</taxon>
        <taxon>Euarchontoglires</taxon>
        <taxon>Primates</taxon>
        <taxon>Haplorrhini</taxon>
        <taxon>Catarrhini</taxon>
        <taxon>Hominidae</taxon>
        <taxon>Homo</taxon>
    </lineage>
</organism>